<keyword id="KW-0963">Cytoplasm</keyword>
<keyword id="KW-0269">Exonuclease</keyword>
<keyword id="KW-0378">Hydrolase</keyword>
<keyword id="KW-0540">Nuclease</keyword>
<organism>
    <name type="scientific">Vibrio cholerae serotype O1 (strain M66-2)</name>
    <dbReference type="NCBI Taxonomy" id="579112"/>
    <lineage>
        <taxon>Bacteria</taxon>
        <taxon>Pseudomonadati</taxon>
        <taxon>Pseudomonadota</taxon>
        <taxon>Gammaproteobacteria</taxon>
        <taxon>Vibrionales</taxon>
        <taxon>Vibrionaceae</taxon>
        <taxon>Vibrio</taxon>
    </lineage>
</organism>
<proteinExistence type="inferred from homology"/>
<feature type="chain" id="PRO_1000200270" description="Exodeoxyribonuclease 7 small subunit">
    <location>
        <begin position="1"/>
        <end position="80"/>
    </location>
</feature>
<sequence>MASKKPENMSFESTIEELEQLVEQLESGDLALDEALRKFERGISLARAGQLKLDDAEQRVRILLSNSDDAPLSDFSDVAE</sequence>
<gene>
    <name evidence="1" type="primary">xseB</name>
    <name type="ordered locus">VCM66_0848</name>
</gene>
<protein>
    <recommendedName>
        <fullName evidence="1">Exodeoxyribonuclease 7 small subunit</fullName>
        <ecNumber evidence="1">3.1.11.6</ecNumber>
    </recommendedName>
    <alternativeName>
        <fullName evidence="1">Exodeoxyribonuclease VII small subunit</fullName>
        <shortName evidence="1">Exonuclease VII small subunit</shortName>
    </alternativeName>
</protein>
<comment type="function">
    <text evidence="1">Bidirectionally degrades single-stranded DNA into large acid-insoluble oligonucleotides, which are then degraded further into small acid-soluble oligonucleotides.</text>
</comment>
<comment type="catalytic activity">
    <reaction evidence="1">
        <text>Exonucleolytic cleavage in either 5'- to 3'- or 3'- to 5'-direction to yield nucleoside 5'-phosphates.</text>
        <dbReference type="EC" id="3.1.11.6"/>
    </reaction>
</comment>
<comment type="subunit">
    <text evidence="1">Heterooligomer composed of large and small subunits.</text>
</comment>
<comment type="subcellular location">
    <subcellularLocation>
        <location evidence="1">Cytoplasm</location>
    </subcellularLocation>
</comment>
<comment type="similarity">
    <text evidence="1">Belongs to the XseB family.</text>
</comment>
<name>EX7S_VIBCM</name>
<reference key="1">
    <citation type="journal article" date="2008" name="PLoS ONE">
        <title>A recalibrated molecular clock and independent origins for the cholera pandemic clones.</title>
        <authorList>
            <person name="Feng L."/>
            <person name="Reeves P.R."/>
            <person name="Lan R."/>
            <person name="Ren Y."/>
            <person name="Gao C."/>
            <person name="Zhou Z."/>
            <person name="Ren Y."/>
            <person name="Cheng J."/>
            <person name="Wang W."/>
            <person name="Wang J."/>
            <person name="Qian W."/>
            <person name="Li D."/>
            <person name="Wang L."/>
        </authorList>
    </citation>
    <scope>NUCLEOTIDE SEQUENCE [LARGE SCALE GENOMIC DNA]</scope>
    <source>
        <strain>M66-2</strain>
    </source>
</reference>
<accession>C3LTE1</accession>
<evidence type="ECO:0000255" key="1">
    <source>
        <dbReference type="HAMAP-Rule" id="MF_00337"/>
    </source>
</evidence>
<dbReference type="EC" id="3.1.11.6" evidence="1"/>
<dbReference type="EMBL" id="CP001233">
    <property type="protein sequence ID" value="ACP05167.1"/>
    <property type="molecule type" value="Genomic_DNA"/>
</dbReference>
<dbReference type="RefSeq" id="WP_000157114.1">
    <property type="nucleotide sequence ID" value="NC_012578.1"/>
</dbReference>
<dbReference type="SMR" id="C3LTE1"/>
<dbReference type="GeneID" id="88784921"/>
<dbReference type="KEGG" id="vcm:VCM66_0848"/>
<dbReference type="HOGENOM" id="CLU_145918_3_3_6"/>
<dbReference type="Proteomes" id="UP000001217">
    <property type="component" value="Chromosome I"/>
</dbReference>
<dbReference type="GO" id="GO:0005829">
    <property type="term" value="C:cytosol"/>
    <property type="evidence" value="ECO:0007669"/>
    <property type="project" value="TreeGrafter"/>
</dbReference>
<dbReference type="GO" id="GO:0009318">
    <property type="term" value="C:exodeoxyribonuclease VII complex"/>
    <property type="evidence" value="ECO:0007669"/>
    <property type="project" value="InterPro"/>
</dbReference>
<dbReference type="GO" id="GO:0008855">
    <property type="term" value="F:exodeoxyribonuclease VII activity"/>
    <property type="evidence" value="ECO:0007669"/>
    <property type="project" value="UniProtKB-UniRule"/>
</dbReference>
<dbReference type="GO" id="GO:0006308">
    <property type="term" value="P:DNA catabolic process"/>
    <property type="evidence" value="ECO:0007669"/>
    <property type="project" value="UniProtKB-UniRule"/>
</dbReference>
<dbReference type="FunFam" id="1.10.287.1040:FF:000001">
    <property type="entry name" value="Exodeoxyribonuclease 7 small subunit"/>
    <property type="match status" value="1"/>
</dbReference>
<dbReference type="Gene3D" id="1.10.287.1040">
    <property type="entry name" value="Exonuclease VII, small subunit"/>
    <property type="match status" value="1"/>
</dbReference>
<dbReference type="HAMAP" id="MF_00337">
    <property type="entry name" value="Exonuc_7_S"/>
    <property type="match status" value="1"/>
</dbReference>
<dbReference type="InterPro" id="IPR003761">
    <property type="entry name" value="Exonuc_VII_S"/>
</dbReference>
<dbReference type="InterPro" id="IPR037004">
    <property type="entry name" value="Exonuc_VII_ssu_sf"/>
</dbReference>
<dbReference type="NCBIfam" id="NF002137">
    <property type="entry name" value="PRK00977.1-1"/>
    <property type="match status" value="1"/>
</dbReference>
<dbReference type="NCBIfam" id="NF002140">
    <property type="entry name" value="PRK00977.1-4"/>
    <property type="match status" value="1"/>
</dbReference>
<dbReference type="NCBIfam" id="TIGR01280">
    <property type="entry name" value="xseB"/>
    <property type="match status" value="1"/>
</dbReference>
<dbReference type="PANTHER" id="PTHR34137">
    <property type="entry name" value="EXODEOXYRIBONUCLEASE 7 SMALL SUBUNIT"/>
    <property type="match status" value="1"/>
</dbReference>
<dbReference type="PANTHER" id="PTHR34137:SF1">
    <property type="entry name" value="EXODEOXYRIBONUCLEASE 7 SMALL SUBUNIT"/>
    <property type="match status" value="1"/>
</dbReference>
<dbReference type="Pfam" id="PF02609">
    <property type="entry name" value="Exonuc_VII_S"/>
    <property type="match status" value="1"/>
</dbReference>
<dbReference type="PIRSF" id="PIRSF006488">
    <property type="entry name" value="Exonuc_VII_S"/>
    <property type="match status" value="1"/>
</dbReference>
<dbReference type="SUPFAM" id="SSF116842">
    <property type="entry name" value="XseB-like"/>
    <property type="match status" value="1"/>
</dbReference>